<protein>
    <recommendedName>
        <fullName evidence="1">Cyclic pyranopterin monophosphate synthase</fullName>
        <ecNumber evidence="1">4.6.1.17</ecNumber>
    </recommendedName>
    <alternativeName>
        <fullName evidence="1">Molybdenum cofactor biosynthesis protein C</fullName>
    </alternativeName>
</protein>
<proteinExistence type="inferred from homology"/>
<reference key="1">
    <citation type="journal article" date="2002" name="Nat. Biotechnol.">
        <title>Genome sequence of the dissimilatory metal ion-reducing bacterium Shewanella oneidensis.</title>
        <authorList>
            <person name="Heidelberg J.F."/>
            <person name="Paulsen I.T."/>
            <person name="Nelson K.E."/>
            <person name="Gaidos E.J."/>
            <person name="Nelson W.C."/>
            <person name="Read T.D."/>
            <person name="Eisen J.A."/>
            <person name="Seshadri R."/>
            <person name="Ward N.L."/>
            <person name="Methe B.A."/>
            <person name="Clayton R.A."/>
            <person name="Meyer T."/>
            <person name="Tsapin A."/>
            <person name="Scott J."/>
            <person name="Beanan M.J."/>
            <person name="Brinkac L.M."/>
            <person name="Daugherty S.C."/>
            <person name="DeBoy R.T."/>
            <person name="Dodson R.J."/>
            <person name="Durkin A.S."/>
            <person name="Haft D.H."/>
            <person name="Kolonay J.F."/>
            <person name="Madupu R."/>
            <person name="Peterson J.D."/>
            <person name="Umayam L.A."/>
            <person name="White O."/>
            <person name="Wolf A.M."/>
            <person name="Vamathevan J.J."/>
            <person name="Weidman J.F."/>
            <person name="Impraim M."/>
            <person name="Lee K."/>
            <person name="Berry K.J."/>
            <person name="Lee C."/>
            <person name="Mueller J."/>
            <person name="Khouri H.M."/>
            <person name="Gill J."/>
            <person name="Utterback T.R."/>
            <person name="McDonald L.A."/>
            <person name="Feldblyum T.V."/>
            <person name="Smith H.O."/>
            <person name="Venter J.C."/>
            <person name="Nealson K.H."/>
            <person name="Fraser C.M."/>
        </authorList>
    </citation>
    <scope>NUCLEOTIDE SEQUENCE [LARGE SCALE GENOMIC DNA]</scope>
    <source>
        <strain>ATCC 700550 / JCM 31522 / CIP 106686 / LMG 19005 / NCIMB 14063 / MR-1</strain>
    </source>
</reference>
<accession>Q8E942</accession>
<name>MOAC_SHEON</name>
<evidence type="ECO:0000255" key="1">
    <source>
        <dbReference type="HAMAP-Rule" id="MF_01224"/>
    </source>
</evidence>
<sequence>MSNVFTHINADGNAHMVDVTEKAVTEREARAEAFIEMASTTLEMIMSGSHHKGDVFATARIAGIQAAKKTSDLIPLCHPLMLTKVEVELEAQPEHNRVRITSLCKLSGKTGVEMEALTAASVAALTIYDMCKAVQKDMVISQVRLLEKRGGKSGHFKAE</sequence>
<feature type="chain" id="PRO_0000097827" description="Cyclic pyranopterin monophosphate synthase">
    <location>
        <begin position="1"/>
        <end position="159"/>
    </location>
</feature>
<feature type="active site" evidence="1">
    <location>
        <position position="129"/>
    </location>
</feature>
<feature type="binding site" evidence="1">
    <location>
        <begin position="76"/>
        <end position="78"/>
    </location>
    <ligand>
        <name>substrate</name>
    </ligand>
</feature>
<feature type="binding site" evidence="1">
    <location>
        <begin position="114"/>
        <end position="115"/>
    </location>
    <ligand>
        <name>substrate</name>
    </ligand>
</feature>
<gene>
    <name evidence="1" type="primary">moaC</name>
    <name type="ordered locus">SO_4451</name>
</gene>
<comment type="function">
    <text evidence="1">Catalyzes the conversion of (8S)-3',8-cyclo-7,8-dihydroguanosine 5'-triphosphate to cyclic pyranopterin monophosphate (cPMP).</text>
</comment>
<comment type="catalytic activity">
    <reaction evidence="1">
        <text>(8S)-3',8-cyclo-7,8-dihydroguanosine 5'-triphosphate = cyclic pyranopterin phosphate + diphosphate</text>
        <dbReference type="Rhea" id="RHEA:49580"/>
        <dbReference type="ChEBI" id="CHEBI:33019"/>
        <dbReference type="ChEBI" id="CHEBI:59648"/>
        <dbReference type="ChEBI" id="CHEBI:131766"/>
        <dbReference type="EC" id="4.6.1.17"/>
    </reaction>
</comment>
<comment type="pathway">
    <text evidence="1">Cofactor biosynthesis; molybdopterin biosynthesis.</text>
</comment>
<comment type="subunit">
    <text evidence="1">Homohexamer; trimer of dimers.</text>
</comment>
<comment type="similarity">
    <text evidence="1">Belongs to the MoaC family.</text>
</comment>
<organism>
    <name type="scientific">Shewanella oneidensis (strain ATCC 700550 / JCM 31522 / CIP 106686 / LMG 19005 / NCIMB 14063 / MR-1)</name>
    <dbReference type="NCBI Taxonomy" id="211586"/>
    <lineage>
        <taxon>Bacteria</taxon>
        <taxon>Pseudomonadati</taxon>
        <taxon>Pseudomonadota</taxon>
        <taxon>Gammaproteobacteria</taxon>
        <taxon>Alteromonadales</taxon>
        <taxon>Shewanellaceae</taxon>
        <taxon>Shewanella</taxon>
    </lineage>
</organism>
<keyword id="KW-0456">Lyase</keyword>
<keyword id="KW-0501">Molybdenum cofactor biosynthesis</keyword>
<keyword id="KW-1185">Reference proteome</keyword>
<dbReference type="EC" id="4.6.1.17" evidence="1"/>
<dbReference type="EMBL" id="AE014299">
    <property type="protein sequence ID" value="AAN57416.1"/>
    <property type="molecule type" value="Genomic_DNA"/>
</dbReference>
<dbReference type="RefSeq" id="NP_719972.1">
    <property type="nucleotide sequence ID" value="NC_004347.2"/>
</dbReference>
<dbReference type="RefSeq" id="WP_011074083.1">
    <property type="nucleotide sequence ID" value="NZ_CP053946.1"/>
</dbReference>
<dbReference type="SMR" id="Q8E942"/>
<dbReference type="STRING" id="211586.SO_4451"/>
<dbReference type="PaxDb" id="211586-SO_4451"/>
<dbReference type="GeneID" id="94726265"/>
<dbReference type="KEGG" id="son:SO_4451"/>
<dbReference type="PATRIC" id="fig|211586.12.peg.4312"/>
<dbReference type="eggNOG" id="COG0315">
    <property type="taxonomic scope" value="Bacteria"/>
</dbReference>
<dbReference type="HOGENOM" id="CLU_074693_1_1_6"/>
<dbReference type="OrthoDB" id="9794429at2"/>
<dbReference type="PhylomeDB" id="Q8E942"/>
<dbReference type="BioCyc" id="SONE211586:G1GMP-4111-MONOMER"/>
<dbReference type="UniPathway" id="UPA00344"/>
<dbReference type="Proteomes" id="UP000008186">
    <property type="component" value="Chromosome"/>
</dbReference>
<dbReference type="GO" id="GO:0061799">
    <property type="term" value="F:cyclic pyranopterin monophosphate synthase activity"/>
    <property type="evidence" value="ECO:0007669"/>
    <property type="project" value="UniProtKB-UniRule"/>
</dbReference>
<dbReference type="GO" id="GO:0006777">
    <property type="term" value="P:Mo-molybdopterin cofactor biosynthetic process"/>
    <property type="evidence" value="ECO:0007669"/>
    <property type="project" value="UniProtKB-UniRule"/>
</dbReference>
<dbReference type="CDD" id="cd01420">
    <property type="entry name" value="MoaC_PE"/>
    <property type="match status" value="1"/>
</dbReference>
<dbReference type="FunFam" id="3.30.70.640:FF:000001">
    <property type="entry name" value="Cyclic pyranopterin monophosphate synthase"/>
    <property type="match status" value="1"/>
</dbReference>
<dbReference type="Gene3D" id="3.30.70.640">
    <property type="entry name" value="Molybdopterin cofactor biosynthesis C (MoaC) domain"/>
    <property type="match status" value="1"/>
</dbReference>
<dbReference type="HAMAP" id="MF_01224_B">
    <property type="entry name" value="MoaC_B"/>
    <property type="match status" value="1"/>
</dbReference>
<dbReference type="InterPro" id="IPR023045">
    <property type="entry name" value="MoaC"/>
</dbReference>
<dbReference type="InterPro" id="IPR047594">
    <property type="entry name" value="MoaC_bact/euk"/>
</dbReference>
<dbReference type="InterPro" id="IPR036522">
    <property type="entry name" value="MoaC_sf"/>
</dbReference>
<dbReference type="InterPro" id="IPR050105">
    <property type="entry name" value="MoCo_biosynth_MoaA/MoaC"/>
</dbReference>
<dbReference type="InterPro" id="IPR002820">
    <property type="entry name" value="Mopterin_CF_biosynth-C_dom"/>
</dbReference>
<dbReference type="NCBIfam" id="TIGR00581">
    <property type="entry name" value="moaC"/>
    <property type="match status" value="1"/>
</dbReference>
<dbReference type="NCBIfam" id="NF006870">
    <property type="entry name" value="PRK09364.1"/>
    <property type="match status" value="1"/>
</dbReference>
<dbReference type="PANTHER" id="PTHR22960:SF0">
    <property type="entry name" value="MOLYBDENUM COFACTOR BIOSYNTHESIS PROTEIN 1"/>
    <property type="match status" value="1"/>
</dbReference>
<dbReference type="PANTHER" id="PTHR22960">
    <property type="entry name" value="MOLYBDOPTERIN COFACTOR SYNTHESIS PROTEIN A"/>
    <property type="match status" value="1"/>
</dbReference>
<dbReference type="Pfam" id="PF01967">
    <property type="entry name" value="MoaC"/>
    <property type="match status" value="1"/>
</dbReference>
<dbReference type="SUPFAM" id="SSF55040">
    <property type="entry name" value="Molybdenum cofactor biosynthesis protein C, MoaC"/>
    <property type="match status" value="1"/>
</dbReference>